<reference key="1">
    <citation type="submission" date="2004-05" db="EMBL/GenBank/DDBJ databases">
        <title>Characterization of porcine UDP-N-acetylglucosamine:a-1,3-D-mannoside beta-1,4-N-acetylglucosaminyltransferase IV-homolog (HGNT-IV-H).</title>
        <authorList>
            <person name="Kim J.G."/>
            <person name="Vallet J.L."/>
            <person name="Nonneman D."/>
            <person name="Rohrer G.A."/>
            <person name="Christenson R.K."/>
        </authorList>
    </citation>
    <scope>NUCLEOTIDE SEQUENCE [MRNA]</scope>
</reference>
<name>MGT4C_PIG</name>
<comment type="function">
    <text evidence="1">Glycosyltransferase that participates in the transfer of N-acetylglucosamine (GlcNAc) to the core mannose residues of N-linked glycans. Catalyzes the formation of the GlcNAcbeta1-4 branch on the GlcNAcbeta1-2Manalpha1-3 arm of the core structure of N-linked glycans. Essential for the production of tri- and tetra-antennary N-linked sugar chains. Does not catalyze the transfer of GlcNAc to the Manalpha1-6 arm to form GlcNAcBeta1-4Manalpha1-6 linkage ('GnT-VI' activity) (By similarity).</text>
</comment>
<comment type="catalytic activity">
    <reaction>
        <text>N(4)-{beta-D-GlcNAc-(1-&gt;2)-alpha-D-Man-(1-&gt;3)-[beta-D-GlcNAc-(1-&gt;2)-alpha-D-Man-(1-&gt;6)]-beta-D-Man-(1-&gt;4)-beta-D-GlcNAc-(1-&gt;4)-beta-D-GlcNAc}-L-asparaginyl-[protein] + UDP-N-acetyl-alpha-D-glucosamine = N(4)-{beta-D-GlcNAc-(1-&gt;2)-[beta-D-GlcNAc-(1-&gt;4)]-alpha-D-Man-(1-&gt;3)-[beta-D-GlcNAc-(1-&gt;2)-alpha-D-Man-(1-&gt;6)]-beta-D-Man-(1-&gt;4)-beta-D-GlcNAc-(1-&gt;4)-beta-D-GlcNAc}-L-asparaginyl-[protein] + UDP + H(+)</text>
        <dbReference type="Rhea" id="RHEA:16057"/>
        <dbReference type="Rhea" id="RHEA-COMP:13526"/>
        <dbReference type="Rhea" id="RHEA-COMP:14374"/>
        <dbReference type="ChEBI" id="CHEBI:15378"/>
        <dbReference type="ChEBI" id="CHEBI:57705"/>
        <dbReference type="ChEBI" id="CHEBI:58223"/>
        <dbReference type="ChEBI" id="CHEBI:60651"/>
        <dbReference type="ChEBI" id="CHEBI:139507"/>
        <dbReference type="EC" id="2.4.1.145"/>
    </reaction>
</comment>
<comment type="cofactor">
    <cofactor evidence="1">
        <name>a divalent metal cation</name>
        <dbReference type="ChEBI" id="CHEBI:60240"/>
    </cofactor>
</comment>
<comment type="pathway">
    <text>Protein modification; protein glycosylation.</text>
</comment>
<comment type="subcellular location">
    <subcellularLocation>
        <location evidence="1">Golgi apparatus membrane</location>
        <topology evidence="1">Single-pass type II membrane protein</topology>
    </subcellularLocation>
</comment>
<comment type="similarity">
    <text evidence="3">Belongs to the glycosyltransferase 54 family.</text>
</comment>
<protein>
    <recommendedName>
        <fullName>Alpha-1,3-mannosyl-glycoprotein 4-beta-N-acetylglucosaminyltransferase C</fullName>
        <ecNumber>2.4.1.145</ecNumber>
    </recommendedName>
    <alternativeName>
        <fullName>N-glycosyl-oligosaccharide-glycoprotein N-acetylglucosaminyltransferase IVc</fullName>
        <shortName>GnT-IVc</shortName>
        <shortName>N-acetylglucosaminyltransferase IVc</shortName>
    </alternativeName>
    <alternativeName>
        <fullName>UDP-N-acetylglucosamine: alpha-1,3-D-mannoside beta-1,4-N-acetylglucosaminyltransferase IVc</fullName>
    </alternativeName>
</protein>
<sequence length="478" mass="56312">MFKFHQVKHIFEILDKMRCLRKRFTVSFLGVLVIFLLFMNLYIEDSYVLEGDKQLVRETSIHQLNPERYVHTFKYLSNFSGTINVTYRYLAVMPFQRKRFLTIGLSSVRRKKGNYLLETIKSIFEQSSYEELKEISVVVHLADFNSSWREVMVQDITQKFAHHIIAGRLMVIHAPEEYYPVLNGLKRNYNDPEDRVRFRSKQNVDYAFLLNFCANISDYYVMLEDDVRCSKNFLTAIKKVITSLQGTYWVTLEFSKLGYIGKLYHSHDLPRLAHFLLMFYQEMPCDWLLTHFRGLLAQKNVIRFKPSLFQHMGYYSSYKGTENKLKDDDFEEELIDLPDNPPASLYTNMSVFENYDASKAYSSVDGYFWGKPPSTGDVFVVVFENPVIIKKIKVSTGTEDRQNDILHHGALDVGGYIRYFKQNRQCITYIRLGEFKNGNFEVSDVNQKIPFDVHCMRIHVTKTQKEWLIIRSISIWTS</sequence>
<proteinExistence type="evidence at transcript level"/>
<organism>
    <name type="scientific">Sus scrofa</name>
    <name type="common">Pig</name>
    <dbReference type="NCBI Taxonomy" id="9823"/>
    <lineage>
        <taxon>Eukaryota</taxon>
        <taxon>Metazoa</taxon>
        <taxon>Chordata</taxon>
        <taxon>Craniata</taxon>
        <taxon>Vertebrata</taxon>
        <taxon>Euteleostomi</taxon>
        <taxon>Mammalia</taxon>
        <taxon>Eutheria</taxon>
        <taxon>Laurasiatheria</taxon>
        <taxon>Artiodactyla</taxon>
        <taxon>Suina</taxon>
        <taxon>Suidae</taxon>
        <taxon>Sus</taxon>
    </lineage>
</organism>
<keyword id="KW-0325">Glycoprotein</keyword>
<keyword id="KW-0328">Glycosyltransferase</keyword>
<keyword id="KW-0333">Golgi apparatus</keyword>
<keyword id="KW-0472">Membrane</keyword>
<keyword id="KW-0479">Metal-binding</keyword>
<keyword id="KW-1185">Reference proteome</keyword>
<keyword id="KW-0735">Signal-anchor</keyword>
<keyword id="KW-0808">Transferase</keyword>
<keyword id="KW-0812">Transmembrane</keyword>
<keyword id="KW-1133">Transmembrane helix</keyword>
<evidence type="ECO:0000250" key="1"/>
<evidence type="ECO:0000255" key="2"/>
<evidence type="ECO:0000305" key="3"/>
<dbReference type="EC" id="2.4.1.145"/>
<dbReference type="EMBL" id="AY626239">
    <property type="protein sequence ID" value="AAT45730.1"/>
    <property type="molecule type" value="mRNA"/>
</dbReference>
<dbReference type="RefSeq" id="NP_001001859.1">
    <property type="nucleotide sequence ID" value="NM_001001859.1"/>
</dbReference>
<dbReference type="SMR" id="Q6ITT3"/>
<dbReference type="FunCoup" id="Q6ITT3">
    <property type="interactions" value="108"/>
</dbReference>
<dbReference type="STRING" id="9823.ENSSSCP00000046930"/>
<dbReference type="CAZy" id="GT54">
    <property type="family name" value="Glycosyltransferase Family 54"/>
</dbReference>
<dbReference type="GlyCosmos" id="Q6ITT3">
    <property type="glycosylation" value="3 sites, No reported glycans"/>
</dbReference>
<dbReference type="GlyGen" id="Q6ITT3">
    <property type="glycosylation" value="3 sites"/>
</dbReference>
<dbReference type="PaxDb" id="9823-ENSSSCP00000000994"/>
<dbReference type="Ensembl" id="ENSSSCT00015036603.1">
    <property type="protein sequence ID" value="ENSSSCP00015014568.1"/>
    <property type="gene ID" value="ENSSSCG00015027448.1"/>
</dbReference>
<dbReference type="Ensembl" id="ENSSSCT00025060305.1">
    <property type="protein sequence ID" value="ENSSSCP00025025572.1"/>
    <property type="gene ID" value="ENSSSCG00025044359.1"/>
</dbReference>
<dbReference type="Ensembl" id="ENSSSCT00030096002.1">
    <property type="protein sequence ID" value="ENSSSCP00030044243.1"/>
    <property type="gene ID" value="ENSSSCG00030068629.1"/>
</dbReference>
<dbReference type="Ensembl" id="ENSSSCT00045035605.1">
    <property type="protein sequence ID" value="ENSSSCP00045024734.1"/>
    <property type="gene ID" value="ENSSSCG00045020885.1"/>
</dbReference>
<dbReference type="Ensembl" id="ENSSSCT00055048911.1">
    <property type="protein sequence ID" value="ENSSSCP00055039047.1"/>
    <property type="gene ID" value="ENSSSCG00055024806.1"/>
</dbReference>
<dbReference type="Ensembl" id="ENSSSCT00060046367.1">
    <property type="protein sequence ID" value="ENSSSCP00060019859.1"/>
    <property type="gene ID" value="ENSSSCG00060034183.1"/>
</dbReference>
<dbReference type="Ensembl" id="ENSSSCT00065000413.1">
    <property type="protein sequence ID" value="ENSSSCP00065000059.1"/>
    <property type="gene ID" value="ENSSSCG00065000372.1"/>
</dbReference>
<dbReference type="Ensembl" id="ENSSSCT00085034166">
    <property type="protein sequence ID" value="ENSSSCP00085023425"/>
    <property type="gene ID" value="ENSSSCG00085018043"/>
</dbReference>
<dbReference type="Ensembl" id="ENSSSCT00090039140">
    <property type="protein sequence ID" value="ENSSSCP00090024371"/>
    <property type="gene ID" value="ENSSSCG00090022074"/>
</dbReference>
<dbReference type="Ensembl" id="ENSSSCT00105023326">
    <property type="protein sequence ID" value="ENSSSCP00105016749"/>
    <property type="gene ID" value="ENSSSCG00105011812"/>
</dbReference>
<dbReference type="Ensembl" id="ENSSSCT00115010740">
    <property type="protein sequence ID" value="ENSSSCP00115010126"/>
    <property type="gene ID" value="ENSSSCG00115006198"/>
</dbReference>
<dbReference type="Ensembl" id="ENSSSCT00130020850">
    <property type="protein sequence ID" value="ENSSSCP00130014266"/>
    <property type="gene ID" value="ENSSSCG00130010959"/>
</dbReference>
<dbReference type="GeneID" id="414851"/>
<dbReference type="KEGG" id="ssc:414851"/>
<dbReference type="CTD" id="25834"/>
<dbReference type="eggNOG" id="KOG3656">
    <property type="taxonomic scope" value="Eukaryota"/>
</dbReference>
<dbReference type="InParanoid" id="Q6ITT3"/>
<dbReference type="OrthoDB" id="2016523at2759"/>
<dbReference type="Reactome" id="R-SSC-975577">
    <property type="pathway name" value="N-Glycan antennae elongation"/>
</dbReference>
<dbReference type="UniPathway" id="UPA00378"/>
<dbReference type="Proteomes" id="UP000008227">
    <property type="component" value="Unplaced"/>
</dbReference>
<dbReference type="Proteomes" id="UP000314985">
    <property type="component" value="Unplaced"/>
</dbReference>
<dbReference type="Proteomes" id="UP000694570">
    <property type="component" value="Unplaced"/>
</dbReference>
<dbReference type="Proteomes" id="UP000694571">
    <property type="component" value="Unplaced"/>
</dbReference>
<dbReference type="Proteomes" id="UP000694720">
    <property type="component" value="Unplaced"/>
</dbReference>
<dbReference type="Proteomes" id="UP000694722">
    <property type="component" value="Unplaced"/>
</dbReference>
<dbReference type="Proteomes" id="UP000694723">
    <property type="component" value="Unplaced"/>
</dbReference>
<dbReference type="Proteomes" id="UP000694724">
    <property type="component" value="Unplaced"/>
</dbReference>
<dbReference type="Proteomes" id="UP000694725">
    <property type="component" value="Unplaced"/>
</dbReference>
<dbReference type="Proteomes" id="UP000694726">
    <property type="component" value="Unplaced"/>
</dbReference>
<dbReference type="Proteomes" id="UP000694727">
    <property type="component" value="Unplaced"/>
</dbReference>
<dbReference type="Proteomes" id="UP000694728">
    <property type="component" value="Unplaced"/>
</dbReference>
<dbReference type="GO" id="GO:0000139">
    <property type="term" value="C:Golgi membrane"/>
    <property type="evidence" value="ECO:0007669"/>
    <property type="project" value="UniProtKB-SubCell"/>
</dbReference>
<dbReference type="GO" id="GO:0008375">
    <property type="term" value="F:acetylglucosaminyltransferase activity"/>
    <property type="evidence" value="ECO:0000318"/>
    <property type="project" value="GO_Central"/>
</dbReference>
<dbReference type="GO" id="GO:0008454">
    <property type="term" value="F:alpha-1,3-mannosylglycoprotein 4-beta-N-acetylglucosaminyltransferase activity"/>
    <property type="evidence" value="ECO:0007669"/>
    <property type="project" value="UniProtKB-EC"/>
</dbReference>
<dbReference type="GO" id="GO:0046872">
    <property type="term" value="F:metal ion binding"/>
    <property type="evidence" value="ECO:0007669"/>
    <property type="project" value="UniProtKB-KW"/>
</dbReference>
<dbReference type="GO" id="GO:0006487">
    <property type="term" value="P:protein N-linked glycosylation"/>
    <property type="evidence" value="ECO:0000318"/>
    <property type="project" value="GO_Central"/>
</dbReference>
<dbReference type="InterPro" id="IPR006759">
    <property type="entry name" value="Glyco_transf_54"/>
</dbReference>
<dbReference type="InterPro" id="IPR056576">
    <property type="entry name" value="MGAT4_A/B/C_C"/>
</dbReference>
<dbReference type="PANTHER" id="PTHR12062:SF14">
    <property type="entry name" value="ALPHA-1,3-MANNOSYL-GLYCOPROTEIN 4-BETA-N-ACETYLGLUCOSAMINYLTRANSFERASE C"/>
    <property type="match status" value="1"/>
</dbReference>
<dbReference type="PANTHER" id="PTHR12062">
    <property type="entry name" value="N-ACETYLGLUCOSAMINYLTRANSFERASE VI"/>
    <property type="match status" value="1"/>
</dbReference>
<dbReference type="Pfam" id="PF04666">
    <property type="entry name" value="MGAT4_cons"/>
    <property type="match status" value="1"/>
</dbReference>
<dbReference type="Pfam" id="PF23524">
    <property type="entry name" value="MGAT4A_C"/>
    <property type="match status" value="1"/>
</dbReference>
<gene>
    <name type="primary">MGAT4C</name>
</gene>
<accession>Q6ITT3</accession>
<feature type="chain" id="PRO_0000288599" description="Alpha-1,3-mannosyl-glycoprotein 4-beta-N-acetylglucosaminyltransferase C">
    <location>
        <begin position="1"/>
        <end position="478"/>
    </location>
</feature>
<feature type="topological domain" description="Cytoplasmic" evidence="2">
    <location>
        <begin position="1"/>
        <end position="23"/>
    </location>
</feature>
<feature type="transmembrane region" description="Helical; Signal-anchor for type II membrane protein" evidence="2">
    <location>
        <begin position="24"/>
        <end position="44"/>
    </location>
</feature>
<feature type="topological domain" description="Lumenal" evidence="2">
    <location>
        <begin position="45"/>
        <end position="478"/>
    </location>
</feature>
<feature type="glycosylation site" description="N-linked (GlcNAc...) asparagine" evidence="2">
    <location>
        <position position="84"/>
    </location>
</feature>
<feature type="glycosylation site" description="N-linked (GlcNAc...) asparagine" evidence="2">
    <location>
        <position position="215"/>
    </location>
</feature>
<feature type="glycosylation site" description="N-linked (GlcNAc...) asparagine" evidence="2">
    <location>
        <position position="348"/>
    </location>
</feature>